<keyword id="KW-0067">ATP-binding</keyword>
<keyword id="KW-0173">Coenzyme A biosynthesis</keyword>
<keyword id="KW-0963">Cytoplasm</keyword>
<keyword id="KW-0460">Magnesium</keyword>
<keyword id="KW-0547">Nucleotide-binding</keyword>
<keyword id="KW-0548">Nucleotidyltransferase</keyword>
<keyword id="KW-1185">Reference proteome</keyword>
<keyword id="KW-0808">Transferase</keyword>
<feature type="chain" id="PRO_0000156308" description="Phosphopantetheine adenylyltransferase">
    <location>
        <begin position="1"/>
        <end position="168"/>
    </location>
</feature>
<feature type="binding site" evidence="1">
    <location>
        <begin position="11"/>
        <end position="12"/>
    </location>
    <ligand>
        <name>ATP</name>
        <dbReference type="ChEBI" id="CHEBI:30616"/>
    </ligand>
</feature>
<feature type="binding site" evidence="1">
    <location>
        <position position="11"/>
    </location>
    <ligand>
        <name>substrate</name>
    </ligand>
</feature>
<feature type="binding site" evidence="1">
    <location>
        <position position="19"/>
    </location>
    <ligand>
        <name>ATP</name>
        <dbReference type="ChEBI" id="CHEBI:30616"/>
    </ligand>
</feature>
<feature type="binding site" evidence="1">
    <location>
        <position position="43"/>
    </location>
    <ligand>
        <name>substrate</name>
    </ligand>
</feature>
<feature type="binding site" evidence="1">
    <location>
        <position position="75"/>
    </location>
    <ligand>
        <name>substrate</name>
    </ligand>
</feature>
<feature type="binding site" evidence="1">
    <location>
        <position position="89"/>
    </location>
    <ligand>
        <name>substrate</name>
    </ligand>
</feature>
<feature type="binding site" evidence="1">
    <location>
        <begin position="90"/>
        <end position="92"/>
    </location>
    <ligand>
        <name>ATP</name>
        <dbReference type="ChEBI" id="CHEBI:30616"/>
    </ligand>
</feature>
<feature type="binding site" evidence="1">
    <location>
        <position position="100"/>
    </location>
    <ligand>
        <name>ATP</name>
        <dbReference type="ChEBI" id="CHEBI:30616"/>
    </ligand>
</feature>
<feature type="binding site" evidence="1">
    <location>
        <begin position="125"/>
        <end position="131"/>
    </location>
    <ligand>
        <name>ATP</name>
        <dbReference type="ChEBI" id="CHEBI:30616"/>
    </ligand>
</feature>
<feature type="site" description="Transition state stabilizer" evidence="1">
    <location>
        <position position="19"/>
    </location>
</feature>
<name>COAD_WIGBR</name>
<reference key="1">
    <citation type="journal article" date="2002" name="Nat. Genet.">
        <title>Genome sequence of the endocellular obligate symbiont of tsetse flies, Wigglesworthia glossinidia.</title>
        <authorList>
            <person name="Akman L."/>
            <person name="Yamashita A."/>
            <person name="Watanabe H."/>
            <person name="Oshima K."/>
            <person name="Shiba T."/>
            <person name="Hattori M."/>
            <person name="Aksoy S."/>
        </authorList>
    </citation>
    <scope>NUCLEOTIDE SEQUENCE [LARGE SCALE GENOMIC DNA]</scope>
</reference>
<evidence type="ECO:0000255" key="1">
    <source>
        <dbReference type="HAMAP-Rule" id="MF_00151"/>
    </source>
</evidence>
<comment type="function">
    <text evidence="1">Reversibly transfers an adenylyl group from ATP to 4'-phosphopantetheine, yielding dephospho-CoA (dPCoA) and pyrophosphate.</text>
</comment>
<comment type="catalytic activity">
    <reaction evidence="1">
        <text>(R)-4'-phosphopantetheine + ATP + H(+) = 3'-dephospho-CoA + diphosphate</text>
        <dbReference type="Rhea" id="RHEA:19801"/>
        <dbReference type="ChEBI" id="CHEBI:15378"/>
        <dbReference type="ChEBI" id="CHEBI:30616"/>
        <dbReference type="ChEBI" id="CHEBI:33019"/>
        <dbReference type="ChEBI" id="CHEBI:57328"/>
        <dbReference type="ChEBI" id="CHEBI:61723"/>
        <dbReference type="EC" id="2.7.7.3"/>
    </reaction>
</comment>
<comment type="cofactor">
    <cofactor evidence="1">
        <name>Mg(2+)</name>
        <dbReference type="ChEBI" id="CHEBI:18420"/>
    </cofactor>
</comment>
<comment type="pathway">
    <text evidence="1">Cofactor biosynthesis; coenzyme A biosynthesis; CoA from (R)-pantothenate: step 4/5.</text>
</comment>
<comment type="subunit">
    <text evidence="1">Homohexamer.</text>
</comment>
<comment type="subcellular location">
    <subcellularLocation>
        <location evidence="1">Cytoplasm</location>
    </subcellularLocation>
</comment>
<comment type="similarity">
    <text evidence="1">Belongs to the bacterial CoaD family.</text>
</comment>
<dbReference type="EC" id="2.7.7.3" evidence="1"/>
<dbReference type="EMBL" id="BA000021">
    <property type="protein sequence ID" value="BAC24435.1"/>
    <property type="molecule type" value="Genomic_DNA"/>
</dbReference>
<dbReference type="SMR" id="Q8D2R5"/>
<dbReference type="STRING" id="36870.gene:10368782"/>
<dbReference type="KEGG" id="wbr:kdtB"/>
<dbReference type="eggNOG" id="COG0669">
    <property type="taxonomic scope" value="Bacteria"/>
</dbReference>
<dbReference type="HOGENOM" id="CLU_100149_0_1_6"/>
<dbReference type="OrthoDB" id="9806661at2"/>
<dbReference type="UniPathway" id="UPA00241">
    <property type="reaction ID" value="UER00355"/>
</dbReference>
<dbReference type="Proteomes" id="UP000000562">
    <property type="component" value="Chromosome"/>
</dbReference>
<dbReference type="GO" id="GO:0005737">
    <property type="term" value="C:cytoplasm"/>
    <property type="evidence" value="ECO:0007669"/>
    <property type="project" value="UniProtKB-SubCell"/>
</dbReference>
<dbReference type="GO" id="GO:0005524">
    <property type="term" value="F:ATP binding"/>
    <property type="evidence" value="ECO:0007669"/>
    <property type="project" value="UniProtKB-KW"/>
</dbReference>
<dbReference type="GO" id="GO:0004595">
    <property type="term" value="F:pantetheine-phosphate adenylyltransferase activity"/>
    <property type="evidence" value="ECO:0007669"/>
    <property type="project" value="UniProtKB-UniRule"/>
</dbReference>
<dbReference type="GO" id="GO:0015937">
    <property type="term" value="P:coenzyme A biosynthetic process"/>
    <property type="evidence" value="ECO:0007669"/>
    <property type="project" value="UniProtKB-UniRule"/>
</dbReference>
<dbReference type="CDD" id="cd02163">
    <property type="entry name" value="PPAT"/>
    <property type="match status" value="1"/>
</dbReference>
<dbReference type="Gene3D" id="3.40.50.620">
    <property type="entry name" value="HUPs"/>
    <property type="match status" value="1"/>
</dbReference>
<dbReference type="HAMAP" id="MF_00151">
    <property type="entry name" value="PPAT_bact"/>
    <property type="match status" value="1"/>
</dbReference>
<dbReference type="InterPro" id="IPR004821">
    <property type="entry name" value="Cyt_trans-like"/>
</dbReference>
<dbReference type="InterPro" id="IPR001980">
    <property type="entry name" value="PPAT"/>
</dbReference>
<dbReference type="InterPro" id="IPR014729">
    <property type="entry name" value="Rossmann-like_a/b/a_fold"/>
</dbReference>
<dbReference type="NCBIfam" id="TIGR01510">
    <property type="entry name" value="coaD_prev_kdtB"/>
    <property type="match status" value="1"/>
</dbReference>
<dbReference type="NCBIfam" id="TIGR00125">
    <property type="entry name" value="cyt_tran_rel"/>
    <property type="match status" value="1"/>
</dbReference>
<dbReference type="PANTHER" id="PTHR21342">
    <property type="entry name" value="PHOSPHOPANTETHEINE ADENYLYLTRANSFERASE"/>
    <property type="match status" value="1"/>
</dbReference>
<dbReference type="PANTHER" id="PTHR21342:SF1">
    <property type="entry name" value="PHOSPHOPANTETHEINE ADENYLYLTRANSFERASE"/>
    <property type="match status" value="1"/>
</dbReference>
<dbReference type="Pfam" id="PF01467">
    <property type="entry name" value="CTP_transf_like"/>
    <property type="match status" value="1"/>
</dbReference>
<dbReference type="PRINTS" id="PR01020">
    <property type="entry name" value="LPSBIOSNTHSS"/>
</dbReference>
<dbReference type="SUPFAM" id="SSF52374">
    <property type="entry name" value="Nucleotidylyl transferase"/>
    <property type="match status" value="1"/>
</dbReference>
<organism>
    <name type="scientific">Wigglesworthia glossinidia brevipalpis</name>
    <dbReference type="NCBI Taxonomy" id="36870"/>
    <lineage>
        <taxon>Bacteria</taxon>
        <taxon>Pseudomonadati</taxon>
        <taxon>Pseudomonadota</taxon>
        <taxon>Gammaproteobacteria</taxon>
        <taxon>Enterobacterales</taxon>
        <taxon>Erwiniaceae</taxon>
        <taxon>Wigglesworthia</taxon>
    </lineage>
</organism>
<sequence length="168" mass="19943">MKNKKAIFPGTFDPLTNGHINLIERSIKVFDKVIIIVANNFKKNQLFNLKERMHHIKKATKNYKNIKVIGINDLTTNFARKNNIKILIRGIRNIFDFENEFIMEKTNKYLYPEMESIFMISDINWSYMSSSMIKEIIFYGGNLDYFLPECVIKDIKKKIKRKIVRNLN</sequence>
<gene>
    <name evidence="1" type="primary">coaD</name>
    <name type="synonym">kdtB</name>
    <name type="ordered locus">WIGBR2890</name>
</gene>
<accession>Q8D2R5</accession>
<protein>
    <recommendedName>
        <fullName evidence="1">Phosphopantetheine adenylyltransferase</fullName>
        <ecNumber evidence="1">2.7.7.3</ecNumber>
    </recommendedName>
    <alternativeName>
        <fullName evidence="1">Dephospho-CoA pyrophosphorylase</fullName>
    </alternativeName>
    <alternativeName>
        <fullName evidence="1">Pantetheine-phosphate adenylyltransferase</fullName>
        <shortName evidence="1">PPAT</shortName>
    </alternativeName>
</protein>
<proteinExistence type="inferred from homology"/>